<reference key="1">
    <citation type="journal article" date="2007" name="PLoS Genet.">
        <title>Patterns and implications of gene gain and loss in the evolution of Prochlorococcus.</title>
        <authorList>
            <person name="Kettler G.C."/>
            <person name="Martiny A.C."/>
            <person name="Huang K."/>
            <person name="Zucker J."/>
            <person name="Coleman M.L."/>
            <person name="Rodrigue S."/>
            <person name="Chen F."/>
            <person name="Lapidus A."/>
            <person name="Ferriera S."/>
            <person name="Johnson J."/>
            <person name="Steglich C."/>
            <person name="Church G.M."/>
            <person name="Richardson P."/>
            <person name="Chisholm S.W."/>
        </authorList>
    </citation>
    <scope>NUCLEOTIDE SEQUENCE [LARGE SCALE GENOMIC DNA]</scope>
    <source>
        <strain>MIT 9301</strain>
    </source>
</reference>
<comment type="function">
    <text evidence="1">Catalyzes the formation of the alpha-1,6-glucosidic linkages in glycogen by scission of a 1,4-alpha-linked oligosaccharide from growing alpha-1,4-glucan chains and the subsequent attachment of the oligosaccharide to the alpha-1,6 position.</text>
</comment>
<comment type="catalytic activity">
    <reaction evidence="1">
        <text>Transfers a segment of a (1-&gt;4)-alpha-D-glucan chain to a primary hydroxy group in a similar glucan chain.</text>
        <dbReference type="EC" id="2.4.1.18"/>
    </reaction>
</comment>
<comment type="pathway">
    <text evidence="1">Glycan biosynthesis; glycogen biosynthesis.</text>
</comment>
<comment type="subunit">
    <text evidence="1">Monomer.</text>
</comment>
<comment type="similarity">
    <text evidence="1">Belongs to the glycosyl hydrolase 13 family. GlgB subfamily.</text>
</comment>
<proteinExistence type="inferred from homology"/>
<feature type="chain" id="PRO_1000044988" description="1,4-alpha-glucan branching enzyme GlgB">
    <location>
        <begin position="1"/>
        <end position="754"/>
    </location>
</feature>
<feature type="active site" description="Nucleophile" evidence="1">
    <location>
        <position position="431"/>
    </location>
</feature>
<feature type="active site" description="Proton donor" evidence="1">
    <location>
        <position position="484"/>
    </location>
</feature>
<dbReference type="EC" id="2.4.1.18" evidence="1"/>
<dbReference type="EMBL" id="CP000576">
    <property type="protein sequence ID" value="ABO17233.1"/>
    <property type="molecule type" value="Genomic_DNA"/>
</dbReference>
<dbReference type="RefSeq" id="WP_011862600.1">
    <property type="nucleotide sequence ID" value="NC_009091.1"/>
</dbReference>
<dbReference type="SMR" id="A3PBV8"/>
<dbReference type="STRING" id="167546.P9301_06101"/>
<dbReference type="CAZy" id="CBM48">
    <property type="family name" value="Carbohydrate-Binding Module Family 48"/>
</dbReference>
<dbReference type="CAZy" id="GH13">
    <property type="family name" value="Glycoside Hydrolase Family 13"/>
</dbReference>
<dbReference type="KEGG" id="pmg:P9301_06101"/>
<dbReference type="eggNOG" id="COG0296">
    <property type="taxonomic scope" value="Bacteria"/>
</dbReference>
<dbReference type="HOGENOM" id="CLU_004245_3_2_3"/>
<dbReference type="OrthoDB" id="9800174at2"/>
<dbReference type="UniPathway" id="UPA00164"/>
<dbReference type="Proteomes" id="UP000001430">
    <property type="component" value="Chromosome"/>
</dbReference>
<dbReference type="GO" id="GO:0005829">
    <property type="term" value="C:cytosol"/>
    <property type="evidence" value="ECO:0007669"/>
    <property type="project" value="TreeGrafter"/>
</dbReference>
<dbReference type="GO" id="GO:0003844">
    <property type="term" value="F:1,4-alpha-glucan branching enzyme activity"/>
    <property type="evidence" value="ECO:0007669"/>
    <property type="project" value="UniProtKB-UniRule"/>
</dbReference>
<dbReference type="GO" id="GO:0043169">
    <property type="term" value="F:cation binding"/>
    <property type="evidence" value="ECO:0007669"/>
    <property type="project" value="InterPro"/>
</dbReference>
<dbReference type="GO" id="GO:0004553">
    <property type="term" value="F:hydrolase activity, hydrolyzing O-glycosyl compounds"/>
    <property type="evidence" value="ECO:0007669"/>
    <property type="project" value="InterPro"/>
</dbReference>
<dbReference type="GO" id="GO:0005978">
    <property type="term" value="P:glycogen biosynthetic process"/>
    <property type="evidence" value="ECO:0007669"/>
    <property type="project" value="UniProtKB-UniRule"/>
</dbReference>
<dbReference type="CDD" id="cd11322">
    <property type="entry name" value="AmyAc_Glg_BE"/>
    <property type="match status" value="1"/>
</dbReference>
<dbReference type="CDD" id="cd02855">
    <property type="entry name" value="E_set_GBE_prok_N"/>
    <property type="match status" value="1"/>
</dbReference>
<dbReference type="FunFam" id="2.60.40.10:FF:000169">
    <property type="entry name" value="1,4-alpha-glucan branching enzyme GlgB"/>
    <property type="match status" value="1"/>
</dbReference>
<dbReference type="FunFam" id="2.60.40.1180:FF:000002">
    <property type="entry name" value="1,4-alpha-glucan branching enzyme GlgB"/>
    <property type="match status" value="1"/>
</dbReference>
<dbReference type="FunFam" id="3.20.20.80:FF:000003">
    <property type="entry name" value="1,4-alpha-glucan branching enzyme GlgB"/>
    <property type="match status" value="1"/>
</dbReference>
<dbReference type="Gene3D" id="3.20.20.80">
    <property type="entry name" value="Glycosidases"/>
    <property type="match status" value="1"/>
</dbReference>
<dbReference type="Gene3D" id="2.60.40.1180">
    <property type="entry name" value="Golgi alpha-mannosidase II"/>
    <property type="match status" value="1"/>
</dbReference>
<dbReference type="Gene3D" id="2.60.40.10">
    <property type="entry name" value="Immunoglobulins"/>
    <property type="match status" value="2"/>
</dbReference>
<dbReference type="HAMAP" id="MF_00685">
    <property type="entry name" value="GlgB"/>
    <property type="match status" value="1"/>
</dbReference>
<dbReference type="InterPro" id="IPR006048">
    <property type="entry name" value="A-amylase/branching_C"/>
</dbReference>
<dbReference type="InterPro" id="IPR037439">
    <property type="entry name" value="Branching_enzy"/>
</dbReference>
<dbReference type="InterPro" id="IPR006407">
    <property type="entry name" value="GlgB"/>
</dbReference>
<dbReference type="InterPro" id="IPR054169">
    <property type="entry name" value="GlgB_N"/>
</dbReference>
<dbReference type="InterPro" id="IPR044143">
    <property type="entry name" value="GlgB_N_E_set_prok"/>
</dbReference>
<dbReference type="InterPro" id="IPR006047">
    <property type="entry name" value="Glyco_hydro_13_cat_dom"/>
</dbReference>
<dbReference type="InterPro" id="IPR004193">
    <property type="entry name" value="Glyco_hydro_13_N"/>
</dbReference>
<dbReference type="InterPro" id="IPR013780">
    <property type="entry name" value="Glyco_hydro_b"/>
</dbReference>
<dbReference type="InterPro" id="IPR017853">
    <property type="entry name" value="Glycoside_hydrolase_SF"/>
</dbReference>
<dbReference type="InterPro" id="IPR013783">
    <property type="entry name" value="Ig-like_fold"/>
</dbReference>
<dbReference type="InterPro" id="IPR014756">
    <property type="entry name" value="Ig_E-set"/>
</dbReference>
<dbReference type="NCBIfam" id="TIGR01515">
    <property type="entry name" value="branching_enzym"/>
    <property type="match status" value="1"/>
</dbReference>
<dbReference type="NCBIfam" id="NF003811">
    <property type="entry name" value="PRK05402.1"/>
    <property type="match status" value="1"/>
</dbReference>
<dbReference type="NCBIfam" id="NF008967">
    <property type="entry name" value="PRK12313.1"/>
    <property type="match status" value="1"/>
</dbReference>
<dbReference type="PANTHER" id="PTHR43651">
    <property type="entry name" value="1,4-ALPHA-GLUCAN-BRANCHING ENZYME"/>
    <property type="match status" value="1"/>
</dbReference>
<dbReference type="PANTHER" id="PTHR43651:SF3">
    <property type="entry name" value="1,4-ALPHA-GLUCAN-BRANCHING ENZYME"/>
    <property type="match status" value="1"/>
</dbReference>
<dbReference type="Pfam" id="PF00128">
    <property type="entry name" value="Alpha-amylase"/>
    <property type="match status" value="2"/>
</dbReference>
<dbReference type="Pfam" id="PF02806">
    <property type="entry name" value="Alpha-amylase_C"/>
    <property type="match status" value="1"/>
</dbReference>
<dbReference type="Pfam" id="PF02922">
    <property type="entry name" value="CBM_48"/>
    <property type="match status" value="1"/>
</dbReference>
<dbReference type="Pfam" id="PF22019">
    <property type="entry name" value="GlgB_N"/>
    <property type="match status" value="1"/>
</dbReference>
<dbReference type="PIRSF" id="PIRSF000463">
    <property type="entry name" value="GlgB"/>
    <property type="match status" value="1"/>
</dbReference>
<dbReference type="SMART" id="SM00642">
    <property type="entry name" value="Aamy"/>
    <property type="match status" value="1"/>
</dbReference>
<dbReference type="SUPFAM" id="SSF51445">
    <property type="entry name" value="(Trans)glycosidases"/>
    <property type="match status" value="1"/>
</dbReference>
<dbReference type="SUPFAM" id="SSF81296">
    <property type="entry name" value="E set domains"/>
    <property type="match status" value="2"/>
</dbReference>
<dbReference type="SUPFAM" id="SSF51011">
    <property type="entry name" value="Glycosyl hydrolase domain"/>
    <property type="match status" value="1"/>
</dbReference>
<protein>
    <recommendedName>
        <fullName evidence="1">1,4-alpha-glucan branching enzyme GlgB</fullName>
        <ecNumber evidence="1">2.4.1.18</ecNumber>
    </recommendedName>
    <alternativeName>
        <fullName evidence="1">1,4-alpha-D-glucan:1,4-alpha-D-glucan 6-glucosyl-transferase</fullName>
    </alternativeName>
    <alternativeName>
        <fullName evidence="1">Alpha-(1-&gt;4)-glucan branching enzyme</fullName>
    </alternativeName>
    <alternativeName>
        <fullName evidence="1">Glycogen branching enzyme</fullName>
        <shortName evidence="1">BE</shortName>
    </alternativeName>
</protein>
<gene>
    <name evidence="1" type="primary">glgB</name>
    <name type="ordered locus">P9301_06101</name>
</gene>
<name>GLGB_PROM0</name>
<sequence length="754" mass="88129">MIETIQADWIKSEAINLENCCNDNPLKILGPHFYEEQWVIRVWVPEADEVKVNFKDKTYKAESINHKWLFEAILPENPNSNYEINISRGGITHTQHDPWSYREEWMGEVDRHLFAEGNHHHIWEKMGAHLIEDKNQKGVMFCIWAPNAKSISIIGDINSWDGRHNPMQKRLGGIWELFMPMMKEGDKYKYEIRTQQGHIYEKADPYGFLHEVRPQNGSIVSKLKNFNWSDSSWISNRDSSSQINKPISVYEMHLGSWLHESTDNKYLDDNGEPRDPVPAADLKPGTRLLTYPELTKKLIPYVKERGFTHIELMPISEHPFDGSWGYQVTGWYAPTSRFGTPNEFREFVNKCHEEGIGVILDWVPGHFPKDKHGLAFFDGCHLYEHGDSRIGEHKEWGTLIFNYSRNEVRNFLVANLVYWFEEFHIDGIRVDAVASMLYRDYLRPDGEWIPNENGGNENIEAVKFLQQANHVLFQHFPGALSIAEESTTWPMVTKPTDMGGLGFNLKWNMGWMHDMLDYFEIDPWFRQFHQNSVTFSITYNYTENFMLALSHDEVVHGKSHLLHKMPGDDWKKYANTRALLTYMWTHPGKKTIFMGMEFGQRQEWNVWDDLQWELLEFEPHRGIRNLIDDLNKLYKNEPALWKNDFDPYGFQWIDCNDKSNSVISFMRRESDTNEWLVIVANFTPNTHGSYKIGVPVEGFYKEIFNSDGSRYGGSNKGNMGGKDTINYNIHDYQNALELALPPLSVSIFKHQSEK</sequence>
<accession>A3PBV8</accession>
<keyword id="KW-0119">Carbohydrate metabolism</keyword>
<keyword id="KW-0320">Glycogen biosynthesis</keyword>
<keyword id="KW-0321">Glycogen metabolism</keyword>
<keyword id="KW-0328">Glycosyltransferase</keyword>
<keyword id="KW-1185">Reference proteome</keyword>
<keyword id="KW-0808">Transferase</keyword>
<organism>
    <name type="scientific">Prochlorococcus marinus (strain MIT 9301)</name>
    <dbReference type="NCBI Taxonomy" id="167546"/>
    <lineage>
        <taxon>Bacteria</taxon>
        <taxon>Bacillati</taxon>
        <taxon>Cyanobacteriota</taxon>
        <taxon>Cyanophyceae</taxon>
        <taxon>Synechococcales</taxon>
        <taxon>Prochlorococcaceae</taxon>
        <taxon>Prochlorococcus</taxon>
    </lineage>
</organism>
<evidence type="ECO:0000255" key="1">
    <source>
        <dbReference type="HAMAP-Rule" id="MF_00685"/>
    </source>
</evidence>